<protein>
    <recommendedName>
        <fullName evidence="1">Small ribosomal subunit protein uS3</fullName>
    </recommendedName>
    <alternativeName>
        <fullName evidence="3">30S ribosomal protein S3</fullName>
    </alternativeName>
</protein>
<reference key="1">
    <citation type="journal article" date="2005" name="BMC Genomics">
        <title>Bacterial genome adaptation to niches: divergence of the potential virulence genes in three Burkholderia species of different survival strategies.</title>
        <authorList>
            <person name="Kim H.S."/>
            <person name="Schell M.A."/>
            <person name="Yu Y."/>
            <person name="Ulrich R.L."/>
            <person name="Sarria S.H."/>
            <person name="Nierman W.C."/>
            <person name="DeShazer D."/>
        </authorList>
    </citation>
    <scope>NUCLEOTIDE SEQUENCE [LARGE SCALE GENOMIC DNA]</scope>
    <source>
        <strain>ATCC 700388 / DSM 13276 / CCUG 48851 / CIP 106301 / E264</strain>
    </source>
</reference>
<gene>
    <name evidence="1" type="primary">rpsC</name>
    <name type="ordered locus">BTH_I3062</name>
</gene>
<organism>
    <name type="scientific">Burkholderia thailandensis (strain ATCC 700388 / DSM 13276 / CCUG 48851 / CIP 106301 / E264)</name>
    <dbReference type="NCBI Taxonomy" id="271848"/>
    <lineage>
        <taxon>Bacteria</taxon>
        <taxon>Pseudomonadati</taxon>
        <taxon>Pseudomonadota</taxon>
        <taxon>Betaproteobacteria</taxon>
        <taxon>Burkholderiales</taxon>
        <taxon>Burkholderiaceae</taxon>
        <taxon>Burkholderia</taxon>
        <taxon>pseudomallei group</taxon>
    </lineage>
</organism>
<evidence type="ECO:0000255" key="1">
    <source>
        <dbReference type="HAMAP-Rule" id="MF_01309"/>
    </source>
</evidence>
<evidence type="ECO:0000256" key="2">
    <source>
        <dbReference type="SAM" id="MobiDB-lite"/>
    </source>
</evidence>
<evidence type="ECO:0000305" key="3"/>
<sequence length="266" mass="29919">MGQKIHPTGFRLAVSRNWASRWYANNNNFAAMLQEDIGVREYLKKKLKNASVGRVIIERPAKNARITIFSSRPGVVIGKKGEDIELLKTELQRRMGVPVHVNIEEIRKPETDAQLIADSITQQLERRIMFRRAMKRAMQNAMRLGAQGIKIMSAGRLNGIEIARTEWYREGRVPLHTLRADIDYATSEAKTTYGVIGVKVWVYKGDTLGRNDAPVVEEVTEDKRPRRNARPGDRRPRRDGEGGAPGARRGGPRRGAGKPEDGKTGE</sequence>
<proteinExistence type="inferred from homology"/>
<keyword id="KW-0687">Ribonucleoprotein</keyword>
<keyword id="KW-0689">Ribosomal protein</keyword>
<keyword id="KW-0694">RNA-binding</keyword>
<keyword id="KW-0699">rRNA-binding</keyword>
<name>RS3_BURTA</name>
<feature type="chain" id="PRO_0000293766" description="Small ribosomal subunit protein uS3">
    <location>
        <begin position="1"/>
        <end position="266"/>
    </location>
</feature>
<feature type="domain" description="KH type-2" evidence="1">
    <location>
        <begin position="39"/>
        <end position="107"/>
    </location>
</feature>
<feature type="region of interest" description="Disordered" evidence="2">
    <location>
        <begin position="214"/>
        <end position="266"/>
    </location>
</feature>
<feature type="compositionally biased region" description="Basic and acidic residues" evidence="2">
    <location>
        <begin position="230"/>
        <end position="241"/>
    </location>
</feature>
<feature type="compositionally biased region" description="Basic and acidic residues" evidence="2">
    <location>
        <begin position="257"/>
        <end position="266"/>
    </location>
</feature>
<dbReference type="EMBL" id="CP000086">
    <property type="protein sequence ID" value="ABC36957.1"/>
    <property type="molecule type" value="Genomic_DNA"/>
</dbReference>
<dbReference type="RefSeq" id="WP_009910030.1">
    <property type="nucleotide sequence ID" value="NZ_CP008786.1"/>
</dbReference>
<dbReference type="SMR" id="Q2SU33"/>
<dbReference type="GeneID" id="45122750"/>
<dbReference type="KEGG" id="bte:BTH_I3062"/>
<dbReference type="HOGENOM" id="CLU_058591_0_2_4"/>
<dbReference type="Proteomes" id="UP000001930">
    <property type="component" value="Chromosome I"/>
</dbReference>
<dbReference type="GO" id="GO:0022627">
    <property type="term" value="C:cytosolic small ribosomal subunit"/>
    <property type="evidence" value="ECO:0007669"/>
    <property type="project" value="TreeGrafter"/>
</dbReference>
<dbReference type="GO" id="GO:0003729">
    <property type="term" value="F:mRNA binding"/>
    <property type="evidence" value="ECO:0007669"/>
    <property type="project" value="UniProtKB-UniRule"/>
</dbReference>
<dbReference type="GO" id="GO:0019843">
    <property type="term" value="F:rRNA binding"/>
    <property type="evidence" value="ECO:0007669"/>
    <property type="project" value="UniProtKB-UniRule"/>
</dbReference>
<dbReference type="GO" id="GO:0003735">
    <property type="term" value="F:structural constituent of ribosome"/>
    <property type="evidence" value="ECO:0007669"/>
    <property type="project" value="InterPro"/>
</dbReference>
<dbReference type="GO" id="GO:0006412">
    <property type="term" value="P:translation"/>
    <property type="evidence" value="ECO:0007669"/>
    <property type="project" value="UniProtKB-UniRule"/>
</dbReference>
<dbReference type="CDD" id="cd02412">
    <property type="entry name" value="KH-II_30S_S3"/>
    <property type="match status" value="1"/>
</dbReference>
<dbReference type="FunFam" id="3.30.1140.32:FF:000006">
    <property type="entry name" value="30S ribosomal protein S3"/>
    <property type="match status" value="1"/>
</dbReference>
<dbReference type="FunFam" id="3.30.300.20:FF:000001">
    <property type="entry name" value="30S ribosomal protein S3"/>
    <property type="match status" value="1"/>
</dbReference>
<dbReference type="Gene3D" id="3.30.300.20">
    <property type="match status" value="1"/>
</dbReference>
<dbReference type="Gene3D" id="3.30.1140.32">
    <property type="entry name" value="Ribosomal protein S3, C-terminal domain"/>
    <property type="match status" value="1"/>
</dbReference>
<dbReference type="HAMAP" id="MF_01309_B">
    <property type="entry name" value="Ribosomal_uS3_B"/>
    <property type="match status" value="1"/>
</dbReference>
<dbReference type="InterPro" id="IPR004087">
    <property type="entry name" value="KH_dom"/>
</dbReference>
<dbReference type="InterPro" id="IPR015946">
    <property type="entry name" value="KH_dom-like_a/b"/>
</dbReference>
<dbReference type="InterPro" id="IPR004044">
    <property type="entry name" value="KH_dom_type_2"/>
</dbReference>
<dbReference type="InterPro" id="IPR009019">
    <property type="entry name" value="KH_sf_prok-type"/>
</dbReference>
<dbReference type="InterPro" id="IPR036419">
    <property type="entry name" value="Ribosomal_S3_C_sf"/>
</dbReference>
<dbReference type="InterPro" id="IPR005704">
    <property type="entry name" value="Ribosomal_uS3_bac-typ"/>
</dbReference>
<dbReference type="InterPro" id="IPR001351">
    <property type="entry name" value="Ribosomal_uS3_C"/>
</dbReference>
<dbReference type="InterPro" id="IPR018280">
    <property type="entry name" value="Ribosomal_uS3_CS"/>
</dbReference>
<dbReference type="NCBIfam" id="TIGR01009">
    <property type="entry name" value="rpsC_bact"/>
    <property type="match status" value="1"/>
</dbReference>
<dbReference type="PANTHER" id="PTHR11760">
    <property type="entry name" value="30S/40S RIBOSOMAL PROTEIN S3"/>
    <property type="match status" value="1"/>
</dbReference>
<dbReference type="PANTHER" id="PTHR11760:SF19">
    <property type="entry name" value="SMALL RIBOSOMAL SUBUNIT PROTEIN US3C"/>
    <property type="match status" value="1"/>
</dbReference>
<dbReference type="Pfam" id="PF07650">
    <property type="entry name" value="KH_2"/>
    <property type="match status" value="1"/>
</dbReference>
<dbReference type="Pfam" id="PF00189">
    <property type="entry name" value="Ribosomal_S3_C"/>
    <property type="match status" value="1"/>
</dbReference>
<dbReference type="SMART" id="SM00322">
    <property type="entry name" value="KH"/>
    <property type="match status" value="1"/>
</dbReference>
<dbReference type="SUPFAM" id="SSF54814">
    <property type="entry name" value="Prokaryotic type KH domain (KH-domain type II)"/>
    <property type="match status" value="1"/>
</dbReference>
<dbReference type="SUPFAM" id="SSF54821">
    <property type="entry name" value="Ribosomal protein S3 C-terminal domain"/>
    <property type="match status" value="1"/>
</dbReference>
<dbReference type="PROSITE" id="PS50823">
    <property type="entry name" value="KH_TYPE_2"/>
    <property type="match status" value="1"/>
</dbReference>
<dbReference type="PROSITE" id="PS00548">
    <property type="entry name" value="RIBOSOMAL_S3"/>
    <property type="match status" value="1"/>
</dbReference>
<accession>Q2SU33</accession>
<comment type="function">
    <text evidence="1">Binds the lower part of the 30S subunit head. Binds mRNA in the 70S ribosome, positioning it for translation.</text>
</comment>
<comment type="subunit">
    <text evidence="1">Part of the 30S ribosomal subunit. Forms a tight complex with proteins S10 and S14.</text>
</comment>
<comment type="similarity">
    <text evidence="1">Belongs to the universal ribosomal protein uS3 family.</text>
</comment>